<name>QUEA_DESPS</name>
<gene>
    <name evidence="1" type="primary">queA</name>
    <name type="ordered locus">DP2843</name>
</gene>
<organism>
    <name type="scientific">Desulfotalea psychrophila (strain LSv54 / DSM 12343)</name>
    <dbReference type="NCBI Taxonomy" id="177439"/>
    <lineage>
        <taxon>Bacteria</taxon>
        <taxon>Pseudomonadati</taxon>
        <taxon>Thermodesulfobacteriota</taxon>
        <taxon>Desulfobulbia</taxon>
        <taxon>Desulfobulbales</taxon>
        <taxon>Desulfocapsaceae</taxon>
        <taxon>Desulfotalea</taxon>
    </lineage>
</organism>
<comment type="function">
    <text evidence="1">Transfers and isomerizes the ribose moiety from AdoMet to the 7-aminomethyl group of 7-deazaguanine (preQ1-tRNA) to give epoxyqueuosine (oQ-tRNA).</text>
</comment>
<comment type="catalytic activity">
    <reaction evidence="1">
        <text>7-aminomethyl-7-carbaguanosine(34) in tRNA + S-adenosyl-L-methionine = epoxyqueuosine(34) in tRNA + adenine + L-methionine + 2 H(+)</text>
        <dbReference type="Rhea" id="RHEA:32155"/>
        <dbReference type="Rhea" id="RHEA-COMP:10342"/>
        <dbReference type="Rhea" id="RHEA-COMP:18582"/>
        <dbReference type="ChEBI" id="CHEBI:15378"/>
        <dbReference type="ChEBI" id="CHEBI:16708"/>
        <dbReference type="ChEBI" id="CHEBI:57844"/>
        <dbReference type="ChEBI" id="CHEBI:59789"/>
        <dbReference type="ChEBI" id="CHEBI:82833"/>
        <dbReference type="ChEBI" id="CHEBI:194443"/>
        <dbReference type="EC" id="2.4.99.17"/>
    </reaction>
</comment>
<comment type="pathway">
    <text evidence="1">tRNA modification; tRNA-queuosine biosynthesis.</text>
</comment>
<comment type="subunit">
    <text evidence="1">Monomer.</text>
</comment>
<comment type="subcellular location">
    <subcellularLocation>
        <location evidence="1">Cytoplasm</location>
    </subcellularLocation>
</comment>
<comment type="similarity">
    <text evidence="1">Belongs to the QueA family.</text>
</comment>
<sequence length="358" mass="39751">MEKDLSREAYYYHLPEENIAQKPADKRDHSKLMVLNTSTGKVEHKIFNNVLEYINPGDMLIVNNTKVFPARLTGHKESGGKVEVFLLELPTYIRPGVSESIALIKSSRKPKVGSTLTINEALSCRVTEQLAGGKARLQLHYDKDVDVTEILAGIGEIPLPPYIKREEGTTPEDVTRYQTVYANVPGAVAAPTAGLHFTEELLQSLRENGIQFGEVTLHVGYGTFAPVRAENIVEHNIHEEFVSVGQETVDKIIATRKAGGKIWAVGTTTVRSLEFAAAQHGGQIAATEGWCALYIYPGFKFQVIDNLITNFHLPDSSLMFLVSALCRREKLLECYQMAIKEDYRFFSYGDAMAVISGE</sequence>
<accession>Q6AJA8</accession>
<proteinExistence type="inferred from homology"/>
<evidence type="ECO:0000255" key="1">
    <source>
        <dbReference type="HAMAP-Rule" id="MF_00113"/>
    </source>
</evidence>
<keyword id="KW-0963">Cytoplasm</keyword>
<keyword id="KW-0671">Queuosine biosynthesis</keyword>
<keyword id="KW-1185">Reference proteome</keyword>
<keyword id="KW-0949">S-adenosyl-L-methionine</keyword>
<keyword id="KW-0808">Transferase</keyword>
<feature type="chain" id="PRO_0000231333" description="S-adenosylmethionine:tRNA ribosyltransferase-isomerase">
    <location>
        <begin position="1"/>
        <end position="358"/>
    </location>
</feature>
<protein>
    <recommendedName>
        <fullName evidence="1">S-adenosylmethionine:tRNA ribosyltransferase-isomerase</fullName>
        <ecNumber evidence="1">2.4.99.17</ecNumber>
    </recommendedName>
    <alternativeName>
        <fullName evidence="1">Queuosine biosynthesis protein QueA</fullName>
    </alternativeName>
</protein>
<reference key="1">
    <citation type="journal article" date="2004" name="Environ. Microbiol.">
        <title>The genome of Desulfotalea psychrophila, a sulfate-reducing bacterium from permanently cold Arctic sediments.</title>
        <authorList>
            <person name="Rabus R."/>
            <person name="Ruepp A."/>
            <person name="Frickey T."/>
            <person name="Rattei T."/>
            <person name="Fartmann B."/>
            <person name="Stark M."/>
            <person name="Bauer M."/>
            <person name="Zibat A."/>
            <person name="Lombardot T."/>
            <person name="Becker I."/>
            <person name="Amann J."/>
            <person name="Gellner K."/>
            <person name="Teeling H."/>
            <person name="Leuschner W.D."/>
            <person name="Gloeckner F.-O."/>
            <person name="Lupas A.N."/>
            <person name="Amann R."/>
            <person name="Klenk H.-P."/>
        </authorList>
    </citation>
    <scope>NUCLEOTIDE SEQUENCE [LARGE SCALE GENOMIC DNA]</scope>
    <source>
        <strain>DSM 12343 / LSv54</strain>
    </source>
</reference>
<dbReference type="EC" id="2.4.99.17" evidence="1"/>
<dbReference type="EMBL" id="CR522870">
    <property type="protein sequence ID" value="CAG37572.1"/>
    <property type="molecule type" value="Genomic_DNA"/>
</dbReference>
<dbReference type="RefSeq" id="WP_011190084.1">
    <property type="nucleotide sequence ID" value="NC_006138.1"/>
</dbReference>
<dbReference type="SMR" id="Q6AJA8"/>
<dbReference type="STRING" id="177439.DP2843"/>
<dbReference type="KEGG" id="dps:DP2843"/>
<dbReference type="eggNOG" id="COG0809">
    <property type="taxonomic scope" value="Bacteria"/>
</dbReference>
<dbReference type="HOGENOM" id="CLU_039110_1_0_7"/>
<dbReference type="OrthoDB" id="9805933at2"/>
<dbReference type="UniPathway" id="UPA00392"/>
<dbReference type="Proteomes" id="UP000000602">
    <property type="component" value="Chromosome"/>
</dbReference>
<dbReference type="GO" id="GO:0005737">
    <property type="term" value="C:cytoplasm"/>
    <property type="evidence" value="ECO:0007669"/>
    <property type="project" value="UniProtKB-SubCell"/>
</dbReference>
<dbReference type="GO" id="GO:0051075">
    <property type="term" value="F:S-adenosylmethionine:tRNA ribosyltransferase-isomerase activity"/>
    <property type="evidence" value="ECO:0007669"/>
    <property type="project" value="UniProtKB-EC"/>
</dbReference>
<dbReference type="GO" id="GO:0008616">
    <property type="term" value="P:queuosine biosynthetic process"/>
    <property type="evidence" value="ECO:0007669"/>
    <property type="project" value="UniProtKB-UniRule"/>
</dbReference>
<dbReference type="GO" id="GO:0002099">
    <property type="term" value="P:tRNA wobble guanine modification"/>
    <property type="evidence" value="ECO:0007669"/>
    <property type="project" value="TreeGrafter"/>
</dbReference>
<dbReference type="FunFam" id="3.40.1780.10:FF:000001">
    <property type="entry name" value="S-adenosylmethionine:tRNA ribosyltransferase-isomerase"/>
    <property type="match status" value="1"/>
</dbReference>
<dbReference type="Gene3D" id="2.40.10.240">
    <property type="entry name" value="QueA-like"/>
    <property type="match status" value="1"/>
</dbReference>
<dbReference type="Gene3D" id="3.40.1780.10">
    <property type="entry name" value="QueA-like"/>
    <property type="match status" value="1"/>
</dbReference>
<dbReference type="HAMAP" id="MF_00113">
    <property type="entry name" value="QueA"/>
    <property type="match status" value="1"/>
</dbReference>
<dbReference type="InterPro" id="IPR003699">
    <property type="entry name" value="QueA"/>
</dbReference>
<dbReference type="InterPro" id="IPR042118">
    <property type="entry name" value="QueA_dom1"/>
</dbReference>
<dbReference type="InterPro" id="IPR042119">
    <property type="entry name" value="QueA_dom2"/>
</dbReference>
<dbReference type="InterPro" id="IPR036100">
    <property type="entry name" value="QueA_sf"/>
</dbReference>
<dbReference type="NCBIfam" id="NF001140">
    <property type="entry name" value="PRK00147.1"/>
    <property type="match status" value="1"/>
</dbReference>
<dbReference type="NCBIfam" id="TIGR00113">
    <property type="entry name" value="queA"/>
    <property type="match status" value="1"/>
</dbReference>
<dbReference type="PANTHER" id="PTHR30307">
    <property type="entry name" value="S-ADENOSYLMETHIONINE:TRNA RIBOSYLTRANSFERASE-ISOMERASE"/>
    <property type="match status" value="1"/>
</dbReference>
<dbReference type="PANTHER" id="PTHR30307:SF0">
    <property type="entry name" value="S-ADENOSYLMETHIONINE:TRNA RIBOSYLTRANSFERASE-ISOMERASE"/>
    <property type="match status" value="1"/>
</dbReference>
<dbReference type="Pfam" id="PF02547">
    <property type="entry name" value="Queuosine_synth"/>
    <property type="match status" value="1"/>
</dbReference>
<dbReference type="SUPFAM" id="SSF111337">
    <property type="entry name" value="QueA-like"/>
    <property type="match status" value="1"/>
</dbReference>